<proteinExistence type="inferred from homology"/>
<evidence type="ECO:0000255" key="1">
    <source>
        <dbReference type="HAMAP-Rule" id="MF_00808"/>
    </source>
</evidence>
<evidence type="ECO:0000305" key="2"/>
<accession>A9BDX0</accession>
<reference key="1">
    <citation type="journal article" date="2007" name="PLoS Genet.">
        <title>Patterns and implications of gene gain and loss in the evolution of Prochlorococcus.</title>
        <authorList>
            <person name="Kettler G.C."/>
            <person name="Martiny A.C."/>
            <person name="Huang K."/>
            <person name="Zucker J."/>
            <person name="Coleman M.L."/>
            <person name="Rodrigue S."/>
            <person name="Chen F."/>
            <person name="Lapidus A."/>
            <person name="Ferriera S."/>
            <person name="Johnson J."/>
            <person name="Steglich C."/>
            <person name="Church G.M."/>
            <person name="Richardson P."/>
            <person name="Chisholm S.W."/>
        </authorList>
    </citation>
    <scope>NUCLEOTIDE SEQUENCE [LARGE SCALE GENOMIC DNA]</scope>
    <source>
        <strain>MIT 9211</strain>
    </source>
</reference>
<sequence>MEAFSYTLLMALAAVTLFFAVAFRDPPKFDK</sequence>
<feature type="chain" id="PRO_1000134018" description="Photosystem II reaction center protein T">
    <location>
        <begin position="1"/>
        <end position="31"/>
    </location>
</feature>
<feature type="transmembrane region" description="Helical" evidence="1">
    <location>
        <begin position="3"/>
        <end position="23"/>
    </location>
</feature>
<gene>
    <name evidence="1" type="primary">psbT</name>
    <name type="ordered locus">P9211_03491</name>
</gene>
<organism>
    <name type="scientific">Prochlorococcus marinus (strain MIT 9211)</name>
    <dbReference type="NCBI Taxonomy" id="93059"/>
    <lineage>
        <taxon>Bacteria</taxon>
        <taxon>Bacillati</taxon>
        <taxon>Cyanobacteriota</taxon>
        <taxon>Cyanophyceae</taxon>
        <taxon>Synechococcales</taxon>
        <taxon>Prochlorococcaceae</taxon>
        <taxon>Prochlorococcus</taxon>
    </lineage>
</organism>
<protein>
    <recommendedName>
        <fullName evidence="1">Photosystem II reaction center protein T</fullName>
        <shortName evidence="1">PSII-T</shortName>
    </recommendedName>
</protein>
<keyword id="KW-0472">Membrane</keyword>
<keyword id="KW-0602">Photosynthesis</keyword>
<keyword id="KW-0604">Photosystem II</keyword>
<keyword id="KW-1185">Reference proteome</keyword>
<keyword id="KW-0793">Thylakoid</keyword>
<keyword id="KW-0812">Transmembrane</keyword>
<keyword id="KW-1133">Transmembrane helix</keyword>
<name>PSBT_PROM4</name>
<comment type="function">
    <text evidence="1">Found at the monomer-monomer interface of the photosystem II (PS II) dimer, plays a role in assembly and dimerization of PSII. PSII is a light-driven water plastoquinone oxidoreductase, using light energy to abstract electrons from H(2)O, generating a proton gradient subsequently used for ATP formation.</text>
</comment>
<comment type="subunit">
    <text evidence="2">PSII is composed of 1 copy each of membrane proteins PsbA, PsbB, PsbC, PsbD, PsbE, PsbF, PsbH, PsbI, PsbJ, PsbK, PsbL, PsbM, PsbT, PsbX, PsbY, Psb30/Ycf12, peripheral proteins PsbO, CyanoQ (PsbQ), PsbU, PsbV and a large number of cofactors. It forms dimeric complexes.</text>
</comment>
<comment type="subcellular location">
    <subcellularLocation>
        <location evidence="1">Cellular thylakoid membrane</location>
        <topology evidence="1">Single-pass membrane protein</topology>
    </subcellularLocation>
</comment>
<comment type="similarity">
    <text evidence="1">Belongs to the PsbT family.</text>
</comment>
<dbReference type="EMBL" id="CP000878">
    <property type="protein sequence ID" value="ABX08280.1"/>
    <property type="molecule type" value="Genomic_DNA"/>
</dbReference>
<dbReference type="RefSeq" id="WP_012194904.1">
    <property type="nucleotide sequence ID" value="NC_009976.1"/>
</dbReference>
<dbReference type="SMR" id="A9BDX0"/>
<dbReference type="STRING" id="93059.P9211_03491"/>
<dbReference type="KEGG" id="pmj:P9211_03491"/>
<dbReference type="HOGENOM" id="CLU_217078_1_0_3"/>
<dbReference type="Proteomes" id="UP000000788">
    <property type="component" value="Chromosome"/>
</dbReference>
<dbReference type="GO" id="GO:0009539">
    <property type="term" value="C:photosystem II reaction center"/>
    <property type="evidence" value="ECO:0007669"/>
    <property type="project" value="InterPro"/>
</dbReference>
<dbReference type="GO" id="GO:0031676">
    <property type="term" value="C:plasma membrane-derived thylakoid membrane"/>
    <property type="evidence" value="ECO:0007669"/>
    <property type="project" value="UniProtKB-SubCell"/>
</dbReference>
<dbReference type="GO" id="GO:0015979">
    <property type="term" value="P:photosynthesis"/>
    <property type="evidence" value="ECO:0007669"/>
    <property type="project" value="UniProtKB-UniRule"/>
</dbReference>
<dbReference type="HAMAP" id="MF_00808">
    <property type="entry name" value="PSII_PsbT"/>
    <property type="match status" value="1"/>
</dbReference>
<dbReference type="InterPro" id="IPR001743">
    <property type="entry name" value="PSII_PsbT"/>
</dbReference>
<dbReference type="InterPro" id="IPR037268">
    <property type="entry name" value="PSII_PsbT_sf"/>
</dbReference>
<dbReference type="NCBIfam" id="NF008825">
    <property type="entry name" value="PRK11875.1"/>
    <property type="match status" value="1"/>
</dbReference>
<dbReference type="Pfam" id="PF01405">
    <property type="entry name" value="PsbT"/>
    <property type="match status" value="1"/>
</dbReference>
<dbReference type="SUPFAM" id="SSF161029">
    <property type="entry name" value="Photosystem II reaction center protein T, PsbT"/>
    <property type="match status" value="1"/>
</dbReference>